<comment type="function">
    <text evidence="1">DNA ligase that catalyzes the formation of phosphodiester linkages between 5'-phosphoryl and 3'-hydroxyl groups in double-stranded DNA using NAD as a coenzyme and as the energy source for the reaction. It is essential for DNA replication and repair of damaged DNA.</text>
</comment>
<comment type="catalytic activity">
    <reaction evidence="1">
        <text>NAD(+) + (deoxyribonucleotide)n-3'-hydroxyl + 5'-phospho-(deoxyribonucleotide)m = (deoxyribonucleotide)n+m + AMP + beta-nicotinamide D-nucleotide.</text>
        <dbReference type="EC" id="6.5.1.2"/>
    </reaction>
</comment>
<comment type="cofactor">
    <cofactor evidence="1">
        <name>Mg(2+)</name>
        <dbReference type="ChEBI" id="CHEBI:18420"/>
    </cofactor>
    <cofactor evidence="1">
        <name>Mn(2+)</name>
        <dbReference type="ChEBI" id="CHEBI:29035"/>
    </cofactor>
</comment>
<comment type="similarity">
    <text evidence="1">Belongs to the NAD-dependent DNA ligase family. LigA subfamily.</text>
</comment>
<keyword id="KW-0227">DNA damage</keyword>
<keyword id="KW-0234">DNA repair</keyword>
<keyword id="KW-0235">DNA replication</keyword>
<keyword id="KW-0436">Ligase</keyword>
<keyword id="KW-0460">Magnesium</keyword>
<keyword id="KW-0464">Manganese</keyword>
<keyword id="KW-0479">Metal-binding</keyword>
<keyword id="KW-0520">NAD</keyword>
<keyword id="KW-0862">Zinc</keyword>
<dbReference type="EC" id="6.5.1.2" evidence="1"/>
<dbReference type="EMBL" id="CP000025">
    <property type="protein sequence ID" value="AAW35801.1"/>
    <property type="molecule type" value="Genomic_DNA"/>
</dbReference>
<dbReference type="RefSeq" id="WP_002867701.1">
    <property type="nucleotide sequence ID" value="NC_003912.7"/>
</dbReference>
<dbReference type="SMR" id="Q5HVI4"/>
<dbReference type="KEGG" id="cjr:CJE0689"/>
<dbReference type="HOGENOM" id="CLU_007764_2_1_7"/>
<dbReference type="GO" id="GO:0005829">
    <property type="term" value="C:cytosol"/>
    <property type="evidence" value="ECO:0007669"/>
    <property type="project" value="TreeGrafter"/>
</dbReference>
<dbReference type="GO" id="GO:0003911">
    <property type="term" value="F:DNA ligase (NAD+) activity"/>
    <property type="evidence" value="ECO:0007669"/>
    <property type="project" value="UniProtKB-UniRule"/>
</dbReference>
<dbReference type="GO" id="GO:0046872">
    <property type="term" value="F:metal ion binding"/>
    <property type="evidence" value="ECO:0007669"/>
    <property type="project" value="UniProtKB-KW"/>
</dbReference>
<dbReference type="GO" id="GO:0006281">
    <property type="term" value="P:DNA repair"/>
    <property type="evidence" value="ECO:0007669"/>
    <property type="project" value="UniProtKB-KW"/>
</dbReference>
<dbReference type="GO" id="GO:0006260">
    <property type="term" value="P:DNA replication"/>
    <property type="evidence" value="ECO:0007669"/>
    <property type="project" value="UniProtKB-KW"/>
</dbReference>
<dbReference type="CDD" id="cd17748">
    <property type="entry name" value="BRCT_DNA_ligase_like"/>
    <property type="match status" value="1"/>
</dbReference>
<dbReference type="CDD" id="cd00114">
    <property type="entry name" value="LIGANc"/>
    <property type="match status" value="1"/>
</dbReference>
<dbReference type="FunFam" id="2.40.50.140:FF:000012">
    <property type="entry name" value="DNA ligase"/>
    <property type="match status" value="1"/>
</dbReference>
<dbReference type="Gene3D" id="1.10.150.20">
    <property type="entry name" value="5' to 3' exonuclease, C-terminal subdomain"/>
    <property type="match status" value="2"/>
</dbReference>
<dbReference type="Gene3D" id="3.40.50.10190">
    <property type="entry name" value="BRCT domain"/>
    <property type="match status" value="1"/>
</dbReference>
<dbReference type="Gene3D" id="3.30.470.30">
    <property type="entry name" value="DNA ligase/mRNA capping enzyme"/>
    <property type="match status" value="1"/>
</dbReference>
<dbReference type="Gene3D" id="1.10.287.610">
    <property type="entry name" value="Helix hairpin bin"/>
    <property type="match status" value="1"/>
</dbReference>
<dbReference type="Gene3D" id="2.40.50.140">
    <property type="entry name" value="Nucleic acid-binding proteins"/>
    <property type="match status" value="1"/>
</dbReference>
<dbReference type="HAMAP" id="MF_01588">
    <property type="entry name" value="DNA_ligase_A"/>
    <property type="match status" value="1"/>
</dbReference>
<dbReference type="InterPro" id="IPR001357">
    <property type="entry name" value="BRCT_dom"/>
</dbReference>
<dbReference type="InterPro" id="IPR036420">
    <property type="entry name" value="BRCT_dom_sf"/>
</dbReference>
<dbReference type="InterPro" id="IPR001679">
    <property type="entry name" value="DNA_ligase"/>
</dbReference>
<dbReference type="InterPro" id="IPR018239">
    <property type="entry name" value="DNA_ligase_AS"/>
</dbReference>
<dbReference type="InterPro" id="IPR033136">
    <property type="entry name" value="DNA_ligase_CS"/>
</dbReference>
<dbReference type="InterPro" id="IPR013839">
    <property type="entry name" value="DNAligase_adenylation"/>
</dbReference>
<dbReference type="InterPro" id="IPR013840">
    <property type="entry name" value="DNAligase_N"/>
</dbReference>
<dbReference type="InterPro" id="IPR012340">
    <property type="entry name" value="NA-bd_OB-fold"/>
</dbReference>
<dbReference type="InterPro" id="IPR004150">
    <property type="entry name" value="NAD_DNA_ligase_OB"/>
</dbReference>
<dbReference type="InterPro" id="IPR010994">
    <property type="entry name" value="RuvA_2-like"/>
</dbReference>
<dbReference type="NCBIfam" id="TIGR00575">
    <property type="entry name" value="dnlj"/>
    <property type="match status" value="1"/>
</dbReference>
<dbReference type="NCBIfam" id="NF005932">
    <property type="entry name" value="PRK07956.1"/>
    <property type="match status" value="1"/>
</dbReference>
<dbReference type="PANTHER" id="PTHR23389">
    <property type="entry name" value="CHROMOSOME TRANSMISSION FIDELITY FACTOR 18"/>
    <property type="match status" value="1"/>
</dbReference>
<dbReference type="PANTHER" id="PTHR23389:SF9">
    <property type="entry name" value="DNA LIGASE"/>
    <property type="match status" value="1"/>
</dbReference>
<dbReference type="Pfam" id="PF00533">
    <property type="entry name" value="BRCT"/>
    <property type="match status" value="1"/>
</dbReference>
<dbReference type="Pfam" id="PF01653">
    <property type="entry name" value="DNA_ligase_aden"/>
    <property type="match status" value="1"/>
</dbReference>
<dbReference type="Pfam" id="PF03120">
    <property type="entry name" value="DNA_ligase_OB"/>
    <property type="match status" value="1"/>
</dbReference>
<dbReference type="PIRSF" id="PIRSF001604">
    <property type="entry name" value="LigA"/>
    <property type="match status" value="1"/>
</dbReference>
<dbReference type="SMART" id="SM00292">
    <property type="entry name" value="BRCT"/>
    <property type="match status" value="1"/>
</dbReference>
<dbReference type="SMART" id="SM00532">
    <property type="entry name" value="LIGANc"/>
    <property type="match status" value="1"/>
</dbReference>
<dbReference type="SUPFAM" id="SSF52113">
    <property type="entry name" value="BRCT domain"/>
    <property type="match status" value="1"/>
</dbReference>
<dbReference type="SUPFAM" id="SSF56091">
    <property type="entry name" value="DNA ligase/mRNA capping enzyme, catalytic domain"/>
    <property type="match status" value="1"/>
</dbReference>
<dbReference type="SUPFAM" id="SSF50249">
    <property type="entry name" value="Nucleic acid-binding proteins"/>
    <property type="match status" value="1"/>
</dbReference>
<dbReference type="SUPFAM" id="SSF47781">
    <property type="entry name" value="RuvA domain 2-like"/>
    <property type="match status" value="1"/>
</dbReference>
<dbReference type="PROSITE" id="PS50172">
    <property type="entry name" value="BRCT"/>
    <property type="match status" value="1"/>
</dbReference>
<dbReference type="PROSITE" id="PS01055">
    <property type="entry name" value="DNA_LIGASE_N1"/>
    <property type="match status" value="1"/>
</dbReference>
<dbReference type="PROSITE" id="PS01056">
    <property type="entry name" value="DNA_LIGASE_N2"/>
    <property type="match status" value="1"/>
</dbReference>
<organism>
    <name type="scientific">Campylobacter jejuni (strain RM1221)</name>
    <dbReference type="NCBI Taxonomy" id="195099"/>
    <lineage>
        <taxon>Bacteria</taxon>
        <taxon>Pseudomonadati</taxon>
        <taxon>Campylobacterota</taxon>
        <taxon>Epsilonproteobacteria</taxon>
        <taxon>Campylobacterales</taxon>
        <taxon>Campylobacteraceae</taxon>
        <taxon>Campylobacter</taxon>
    </lineage>
</organism>
<sequence length="647" mass="73920">MKKEEYLEKVALANLWMRAYYEKDEPLASDEEYDALIRELRVFEEQNKDEISKDSPTQKIAPTIQSEFKKIAHLKRMWSMEDVFDESELRAWAKRAKCEKNFFIEPKFDGASLNLLYENGKLVSGATRGDGEVGEDITLNVFEIENIPKNIAYKERIEIRGEVVILKDDFEKINEKRALLNQSLFANPRNAASGSLRQLDTSITKERNLKFYPWGVGENTLNFTKHSEVMQFIRELGFLKDDFVRLCANLDEVLKAYDELLVLREKKPMMMDGMVVRVDDLALCEELGYTVKFPKFMAAFKFPALEKTTRLIGVNLQVGRSGAITPVAVLEPVNLDGVVVKSATLHNFDEIARLDVKINDFVSVIRSGDVIPKITKVFKERREGLEMEISRPKLCPTCQSELLDEGTLIKCQNIDCEDRLVNSIIHFVSKKCLNIDGLGENIVELLYKHKKITTLESIFHLKFNDFEGLEGFKEKKINNLLNAIEQARECELFRFITALGIEHIGEVAAKKLSLSFGKEWYKQSFEAYANLEGFGEQMALSLCEFTRVNHTRIDEFYKLLNLKIEKLEIKSDGVIFGKTFVITGTLSRPRDEFKALIEKLGGKVSGSVSKKTDYVLFGEEAGSKLSKAKELEVKCIDESAFNELVKE</sequence>
<gene>
    <name evidence="1" type="primary">ligA</name>
    <name type="ordered locus">CJE0689</name>
</gene>
<name>DNLJ_CAMJR</name>
<accession>Q5HVI4</accession>
<evidence type="ECO:0000255" key="1">
    <source>
        <dbReference type="HAMAP-Rule" id="MF_01588"/>
    </source>
</evidence>
<proteinExistence type="inferred from homology"/>
<feature type="chain" id="PRO_0000313177" description="DNA ligase">
    <location>
        <begin position="1"/>
        <end position="647"/>
    </location>
</feature>
<feature type="domain" description="BRCT" evidence="1">
    <location>
        <begin position="570"/>
        <end position="647"/>
    </location>
</feature>
<feature type="active site" description="N6-AMP-lysine intermediate" evidence="1">
    <location>
        <position position="107"/>
    </location>
</feature>
<feature type="binding site" evidence="1">
    <location>
        <begin position="30"/>
        <end position="34"/>
    </location>
    <ligand>
        <name>NAD(+)</name>
        <dbReference type="ChEBI" id="CHEBI:57540"/>
    </ligand>
</feature>
<feature type="binding site" evidence="1">
    <location>
        <begin position="79"/>
        <end position="80"/>
    </location>
    <ligand>
        <name>NAD(+)</name>
        <dbReference type="ChEBI" id="CHEBI:57540"/>
    </ligand>
</feature>
<feature type="binding site" evidence="1">
    <location>
        <position position="105"/>
    </location>
    <ligand>
        <name>NAD(+)</name>
        <dbReference type="ChEBI" id="CHEBI:57540"/>
    </ligand>
</feature>
<feature type="binding site" evidence="1">
    <location>
        <position position="128"/>
    </location>
    <ligand>
        <name>NAD(+)</name>
        <dbReference type="ChEBI" id="CHEBI:57540"/>
    </ligand>
</feature>
<feature type="binding site" evidence="1">
    <location>
        <position position="162"/>
    </location>
    <ligand>
        <name>NAD(+)</name>
        <dbReference type="ChEBI" id="CHEBI:57540"/>
    </ligand>
</feature>
<feature type="binding site" evidence="1">
    <location>
        <position position="301"/>
    </location>
    <ligand>
        <name>NAD(+)</name>
        <dbReference type="ChEBI" id="CHEBI:57540"/>
    </ligand>
</feature>
<feature type="binding site" evidence="1">
    <location>
        <position position="395"/>
    </location>
    <ligand>
        <name>Zn(2+)</name>
        <dbReference type="ChEBI" id="CHEBI:29105"/>
    </ligand>
</feature>
<feature type="binding site" evidence="1">
    <location>
        <position position="398"/>
    </location>
    <ligand>
        <name>Zn(2+)</name>
        <dbReference type="ChEBI" id="CHEBI:29105"/>
    </ligand>
</feature>
<feature type="binding site" evidence="1">
    <location>
        <position position="411"/>
    </location>
    <ligand>
        <name>Zn(2+)</name>
        <dbReference type="ChEBI" id="CHEBI:29105"/>
    </ligand>
</feature>
<feature type="binding site" evidence="1">
    <location>
        <position position="416"/>
    </location>
    <ligand>
        <name>Zn(2+)</name>
        <dbReference type="ChEBI" id="CHEBI:29105"/>
    </ligand>
</feature>
<protein>
    <recommendedName>
        <fullName evidence="1">DNA ligase</fullName>
        <ecNumber evidence="1">6.5.1.2</ecNumber>
    </recommendedName>
    <alternativeName>
        <fullName evidence="1">Polydeoxyribonucleotide synthase [NAD(+)]</fullName>
    </alternativeName>
</protein>
<reference key="1">
    <citation type="journal article" date="2005" name="PLoS Biol.">
        <title>Major structural differences and novel potential virulence mechanisms from the genomes of multiple Campylobacter species.</title>
        <authorList>
            <person name="Fouts D.E."/>
            <person name="Mongodin E.F."/>
            <person name="Mandrell R.E."/>
            <person name="Miller W.G."/>
            <person name="Rasko D.A."/>
            <person name="Ravel J."/>
            <person name="Brinkac L.M."/>
            <person name="DeBoy R.T."/>
            <person name="Parker C.T."/>
            <person name="Daugherty S.C."/>
            <person name="Dodson R.J."/>
            <person name="Durkin A.S."/>
            <person name="Madupu R."/>
            <person name="Sullivan S.A."/>
            <person name="Shetty J.U."/>
            <person name="Ayodeji M.A."/>
            <person name="Shvartsbeyn A."/>
            <person name="Schatz M.C."/>
            <person name="Badger J.H."/>
            <person name="Fraser C.M."/>
            <person name="Nelson K.E."/>
        </authorList>
    </citation>
    <scope>NUCLEOTIDE SEQUENCE [LARGE SCALE GENOMIC DNA]</scope>
    <source>
        <strain>RM1221</strain>
    </source>
</reference>